<gene>
    <name evidence="1" type="primary">rpsF</name>
    <name type="ordered locus">BCAH187_A5662</name>
</gene>
<accession>B7HZG1</accession>
<evidence type="ECO:0000255" key="1">
    <source>
        <dbReference type="HAMAP-Rule" id="MF_00360"/>
    </source>
</evidence>
<evidence type="ECO:0000305" key="2"/>
<sequence length="96" mass="11269">MRKYEIMYIIRPGVEEEAQKALVERFAGVLTNNGAEIINTKEWGKRRLAYEINDLREGFYMILNVNANAEAINEFDRLAKINEDILRHIVVKEEEK</sequence>
<feature type="chain" id="PRO_1000120707" description="Small ribosomal subunit protein bS6">
    <location>
        <begin position="1"/>
        <end position="96"/>
    </location>
</feature>
<proteinExistence type="inferred from homology"/>
<name>RS6_BACC7</name>
<protein>
    <recommendedName>
        <fullName evidence="1">Small ribosomal subunit protein bS6</fullName>
    </recommendedName>
    <alternativeName>
        <fullName evidence="2">30S ribosomal protein S6</fullName>
    </alternativeName>
</protein>
<dbReference type="EMBL" id="CP001177">
    <property type="protein sequence ID" value="ACJ78305.1"/>
    <property type="molecule type" value="Genomic_DNA"/>
</dbReference>
<dbReference type="SMR" id="B7HZG1"/>
<dbReference type="KEGG" id="bcr:BCAH187_A5662"/>
<dbReference type="HOGENOM" id="CLU_113441_5_3_9"/>
<dbReference type="Proteomes" id="UP000002214">
    <property type="component" value="Chromosome"/>
</dbReference>
<dbReference type="GO" id="GO:0005737">
    <property type="term" value="C:cytoplasm"/>
    <property type="evidence" value="ECO:0007669"/>
    <property type="project" value="UniProtKB-ARBA"/>
</dbReference>
<dbReference type="GO" id="GO:1990904">
    <property type="term" value="C:ribonucleoprotein complex"/>
    <property type="evidence" value="ECO:0007669"/>
    <property type="project" value="UniProtKB-KW"/>
</dbReference>
<dbReference type="GO" id="GO:0005840">
    <property type="term" value="C:ribosome"/>
    <property type="evidence" value="ECO:0007669"/>
    <property type="project" value="UniProtKB-KW"/>
</dbReference>
<dbReference type="GO" id="GO:0070181">
    <property type="term" value="F:small ribosomal subunit rRNA binding"/>
    <property type="evidence" value="ECO:0007669"/>
    <property type="project" value="TreeGrafter"/>
</dbReference>
<dbReference type="GO" id="GO:0003735">
    <property type="term" value="F:structural constituent of ribosome"/>
    <property type="evidence" value="ECO:0007669"/>
    <property type="project" value="InterPro"/>
</dbReference>
<dbReference type="GO" id="GO:0006412">
    <property type="term" value="P:translation"/>
    <property type="evidence" value="ECO:0007669"/>
    <property type="project" value="UniProtKB-UniRule"/>
</dbReference>
<dbReference type="CDD" id="cd00473">
    <property type="entry name" value="bS6"/>
    <property type="match status" value="1"/>
</dbReference>
<dbReference type="FunFam" id="3.30.70.60:FF:000002">
    <property type="entry name" value="30S ribosomal protein S6"/>
    <property type="match status" value="1"/>
</dbReference>
<dbReference type="Gene3D" id="3.30.70.60">
    <property type="match status" value="1"/>
</dbReference>
<dbReference type="HAMAP" id="MF_00360">
    <property type="entry name" value="Ribosomal_bS6"/>
    <property type="match status" value="1"/>
</dbReference>
<dbReference type="InterPro" id="IPR000529">
    <property type="entry name" value="Ribosomal_bS6"/>
</dbReference>
<dbReference type="InterPro" id="IPR020815">
    <property type="entry name" value="Ribosomal_bS6_CS"/>
</dbReference>
<dbReference type="InterPro" id="IPR035980">
    <property type="entry name" value="Ribosomal_bS6_sf"/>
</dbReference>
<dbReference type="InterPro" id="IPR020814">
    <property type="entry name" value="Ribosomal_S6_plastid/chlpt"/>
</dbReference>
<dbReference type="InterPro" id="IPR014717">
    <property type="entry name" value="Transl_elong_EF1B/ribsomal_bS6"/>
</dbReference>
<dbReference type="NCBIfam" id="TIGR00166">
    <property type="entry name" value="S6"/>
    <property type="match status" value="1"/>
</dbReference>
<dbReference type="PANTHER" id="PTHR21011">
    <property type="entry name" value="MITOCHONDRIAL 28S RIBOSOMAL PROTEIN S6"/>
    <property type="match status" value="1"/>
</dbReference>
<dbReference type="PANTHER" id="PTHR21011:SF1">
    <property type="entry name" value="SMALL RIBOSOMAL SUBUNIT PROTEIN BS6M"/>
    <property type="match status" value="1"/>
</dbReference>
<dbReference type="Pfam" id="PF01250">
    <property type="entry name" value="Ribosomal_S6"/>
    <property type="match status" value="1"/>
</dbReference>
<dbReference type="SUPFAM" id="SSF54995">
    <property type="entry name" value="Ribosomal protein S6"/>
    <property type="match status" value="1"/>
</dbReference>
<dbReference type="PROSITE" id="PS01048">
    <property type="entry name" value="RIBOSOMAL_S6"/>
    <property type="match status" value="1"/>
</dbReference>
<reference key="1">
    <citation type="submission" date="2008-10" db="EMBL/GenBank/DDBJ databases">
        <title>Genome sequence of Bacillus cereus AH187.</title>
        <authorList>
            <person name="Dodson R.J."/>
            <person name="Durkin A.S."/>
            <person name="Rosovitz M.J."/>
            <person name="Rasko D.A."/>
            <person name="Kolsto A.B."/>
            <person name="Okstad O.A."/>
            <person name="Ravel J."/>
            <person name="Sutton G."/>
        </authorList>
    </citation>
    <scope>NUCLEOTIDE SEQUENCE [LARGE SCALE GENOMIC DNA]</scope>
    <source>
        <strain>AH187</strain>
    </source>
</reference>
<keyword id="KW-0687">Ribonucleoprotein</keyword>
<keyword id="KW-0689">Ribosomal protein</keyword>
<keyword id="KW-0694">RNA-binding</keyword>
<keyword id="KW-0699">rRNA-binding</keyword>
<comment type="function">
    <text evidence="1">Binds together with bS18 to 16S ribosomal RNA.</text>
</comment>
<comment type="similarity">
    <text evidence="1">Belongs to the bacterial ribosomal protein bS6 family.</text>
</comment>
<organism>
    <name type="scientific">Bacillus cereus (strain AH187)</name>
    <dbReference type="NCBI Taxonomy" id="405534"/>
    <lineage>
        <taxon>Bacteria</taxon>
        <taxon>Bacillati</taxon>
        <taxon>Bacillota</taxon>
        <taxon>Bacilli</taxon>
        <taxon>Bacillales</taxon>
        <taxon>Bacillaceae</taxon>
        <taxon>Bacillus</taxon>
        <taxon>Bacillus cereus group</taxon>
    </lineage>
</organism>